<organism>
    <name type="scientific">Shigella dysenteriae serotype 1 (strain Sd197)</name>
    <dbReference type="NCBI Taxonomy" id="300267"/>
    <lineage>
        <taxon>Bacteria</taxon>
        <taxon>Pseudomonadati</taxon>
        <taxon>Pseudomonadota</taxon>
        <taxon>Gammaproteobacteria</taxon>
        <taxon>Enterobacterales</taxon>
        <taxon>Enterobacteriaceae</taxon>
        <taxon>Shigella</taxon>
    </lineage>
</organism>
<sequence length="502" mass="56230">MTEKKYIVALDQGTTSSRAVVMNHDANIISVSQREFEQIYPKPGWVEHDPMEIWATQSSTLVEVLAKADISSDQIAAIGITNQRETTIVWEKETGKPIYNAIVWQCRRTAEICEHLKRDGLEDYIRSNTGLVIDPYFSGTKVKWILDHVEGSRERARRGELLFGTVDTWLIWKMTQGRVHVTDYTNASRTMLFNIHTLDWDDKMLEVLDIPREMLPEVRRSSEVYGQTNIGGKGGTRIPISGIAGDQQAALFGQLCVKEGMAKNTYGTGCFMLMNTGEKAVKSENGLLTTIACGPTGEVNYALEGAVFMAGASIQWLRDEMKLINDAYDSEYFATKVQNTNGVYVVPAFTGLGAPYWDPYARGAIFGLTRGVNANHIIRATLESIAYQTRDVLEAMQADSGIRLHALRVDGGAVANNFLMQFQSDILGTRVERPEVREVTALGAAYLAGLAVGFWQNLDELQEKAVIEREFRPGIETTERNYRYAGWKKAVKRAMAWEEHDE</sequence>
<keyword id="KW-0021">Allosteric enzyme</keyword>
<keyword id="KW-0067">ATP-binding</keyword>
<keyword id="KW-0319">Glycerol metabolism</keyword>
<keyword id="KW-0418">Kinase</keyword>
<keyword id="KW-0479">Metal-binding</keyword>
<keyword id="KW-0547">Nucleotide-binding</keyword>
<keyword id="KW-1185">Reference proteome</keyword>
<keyword id="KW-0808">Transferase</keyword>
<keyword id="KW-0862">Zinc</keyword>
<comment type="function">
    <text evidence="1">Key enzyme in the regulation of glycerol uptake and metabolism. Catalyzes the phosphorylation of glycerol to yield sn-glycerol 3-phosphate.</text>
</comment>
<comment type="catalytic activity">
    <reaction evidence="1">
        <text>glycerol + ATP = sn-glycerol 3-phosphate + ADP + H(+)</text>
        <dbReference type="Rhea" id="RHEA:21644"/>
        <dbReference type="ChEBI" id="CHEBI:15378"/>
        <dbReference type="ChEBI" id="CHEBI:17754"/>
        <dbReference type="ChEBI" id="CHEBI:30616"/>
        <dbReference type="ChEBI" id="CHEBI:57597"/>
        <dbReference type="ChEBI" id="CHEBI:456216"/>
        <dbReference type="EC" id="2.7.1.30"/>
    </reaction>
</comment>
<comment type="activity regulation">
    <text evidence="1">Activity of this regulatory enzyme is affected by several metabolites. Allosterically and non-competitively inhibited by fructose 1,6-bisphosphate (FBP) and unphosphorylated phosphocarrier protein EIIA-Glc (III-Glc), an integral component of the bacterial phosphotransferase (PTS) system.</text>
</comment>
<comment type="pathway">
    <text evidence="1">Polyol metabolism; glycerol degradation via glycerol kinase pathway; sn-glycerol 3-phosphate from glycerol: step 1/1.</text>
</comment>
<comment type="subunit">
    <text evidence="1">Homotetramer and homodimer (in equilibrium). Heterodimer with EIIA-Glc. Binds 1 zinc ion per glycerol kinase EIIA-Glc dimer. The zinc ion is important for dimerization.</text>
</comment>
<comment type="similarity">
    <text evidence="1">Belongs to the FGGY kinase family.</text>
</comment>
<protein>
    <recommendedName>
        <fullName evidence="1">Glycerol kinase</fullName>
        <ecNumber evidence="1">2.7.1.30</ecNumber>
    </recommendedName>
    <alternativeName>
        <fullName evidence="1">ATP:glycerol 3-phosphotransferase</fullName>
    </alternativeName>
    <alternativeName>
        <fullName evidence="1">Glycerokinase</fullName>
        <shortName evidence="1">GK</shortName>
    </alternativeName>
</protein>
<evidence type="ECO:0000255" key="1">
    <source>
        <dbReference type="HAMAP-Rule" id="MF_00186"/>
    </source>
</evidence>
<proteinExistence type="inferred from homology"/>
<gene>
    <name evidence="1" type="primary">glpK</name>
    <name type="ordered locus">SDY_3818</name>
</gene>
<name>GLPK_SHIDS</name>
<accession>Q32A92</accession>
<reference key="1">
    <citation type="journal article" date="2005" name="Nucleic Acids Res.">
        <title>Genome dynamics and diversity of Shigella species, the etiologic agents of bacillary dysentery.</title>
        <authorList>
            <person name="Yang F."/>
            <person name="Yang J."/>
            <person name="Zhang X."/>
            <person name="Chen L."/>
            <person name="Jiang Y."/>
            <person name="Yan Y."/>
            <person name="Tang X."/>
            <person name="Wang J."/>
            <person name="Xiong Z."/>
            <person name="Dong J."/>
            <person name="Xue Y."/>
            <person name="Zhu Y."/>
            <person name="Xu X."/>
            <person name="Sun L."/>
            <person name="Chen S."/>
            <person name="Nie H."/>
            <person name="Peng J."/>
            <person name="Xu J."/>
            <person name="Wang Y."/>
            <person name="Yuan Z."/>
            <person name="Wen Y."/>
            <person name="Yao Z."/>
            <person name="Shen Y."/>
            <person name="Qiang B."/>
            <person name="Hou Y."/>
            <person name="Yu J."/>
            <person name="Jin Q."/>
        </authorList>
    </citation>
    <scope>NUCLEOTIDE SEQUENCE [LARGE SCALE GENOMIC DNA]</scope>
    <source>
        <strain>Sd197</strain>
    </source>
</reference>
<feature type="chain" id="PRO_1000020787" description="Glycerol kinase">
    <location>
        <begin position="1"/>
        <end position="502"/>
    </location>
</feature>
<feature type="binding site" evidence="1">
    <location>
        <position position="14"/>
    </location>
    <ligand>
        <name>ADP</name>
        <dbReference type="ChEBI" id="CHEBI:456216"/>
    </ligand>
</feature>
<feature type="binding site" evidence="1">
    <location>
        <position position="14"/>
    </location>
    <ligand>
        <name>ATP</name>
        <dbReference type="ChEBI" id="CHEBI:30616"/>
    </ligand>
</feature>
<feature type="binding site" evidence="1">
    <location>
        <position position="14"/>
    </location>
    <ligand>
        <name>sn-glycerol 3-phosphate</name>
        <dbReference type="ChEBI" id="CHEBI:57597"/>
    </ligand>
</feature>
<feature type="binding site" evidence="1">
    <location>
        <position position="15"/>
    </location>
    <ligand>
        <name>ATP</name>
        <dbReference type="ChEBI" id="CHEBI:30616"/>
    </ligand>
</feature>
<feature type="binding site" evidence="1">
    <location>
        <position position="16"/>
    </location>
    <ligand>
        <name>ATP</name>
        <dbReference type="ChEBI" id="CHEBI:30616"/>
    </ligand>
</feature>
<feature type="binding site" evidence="1">
    <location>
        <position position="18"/>
    </location>
    <ligand>
        <name>ADP</name>
        <dbReference type="ChEBI" id="CHEBI:456216"/>
    </ligand>
</feature>
<feature type="binding site" evidence="1">
    <location>
        <position position="84"/>
    </location>
    <ligand>
        <name>glycerol</name>
        <dbReference type="ChEBI" id="CHEBI:17754"/>
    </ligand>
</feature>
<feature type="binding site" evidence="1">
    <location>
        <position position="84"/>
    </location>
    <ligand>
        <name>sn-glycerol 3-phosphate</name>
        <dbReference type="ChEBI" id="CHEBI:57597"/>
    </ligand>
</feature>
<feature type="binding site" evidence="1">
    <location>
        <position position="85"/>
    </location>
    <ligand>
        <name>glycerol</name>
        <dbReference type="ChEBI" id="CHEBI:17754"/>
    </ligand>
</feature>
<feature type="binding site" evidence="1">
    <location>
        <position position="85"/>
    </location>
    <ligand>
        <name>sn-glycerol 3-phosphate</name>
        <dbReference type="ChEBI" id="CHEBI:57597"/>
    </ligand>
</feature>
<feature type="binding site" evidence="1">
    <location>
        <position position="136"/>
    </location>
    <ligand>
        <name>glycerol</name>
        <dbReference type="ChEBI" id="CHEBI:17754"/>
    </ligand>
</feature>
<feature type="binding site" evidence="1">
    <location>
        <position position="136"/>
    </location>
    <ligand>
        <name>sn-glycerol 3-phosphate</name>
        <dbReference type="ChEBI" id="CHEBI:57597"/>
    </ligand>
</feature>
<feature type="binding site" evidence="1">
    <location>
        <position position="246"/>
    </location>
    <ligand>
        <name>glycerol</name>
        <dbReference type="ChEBI" id="CHEBI:17754"/>
    </ligand>
</feature>
<feature type="binding site" evidence="1">
    <location>
        <position position="246"/>
    </location>
    <ligand>
        <name>sn-glycerol 3-phosphate</name>
        <dbReference type="ChEBI" id="CHEBI:57597"/>
    </ligand>
</feature>
<feature type="binding site" evidence="1">
    <location>
        <position position="247"/>
    </location>
    <ligand>
        <name>glycerol</name>
        <dbReference type="ChEBI" id="CHEBI:17754"/>
    </ligand>
</feature>
<feature type="binding site" evidence="1">
    <location>
        <position position="268"/>
    </location>
    <ligand>
        <name>ADP</name>
        <dbReference type="ChEBI" id="CHEBI:456216"/>
    </ligand>
</feature>
<feature type="binding site" evidence="1">
    <location>
        <position position="268"/>
    </location>
    <ligand>
        <name>ATP</name>
        <dbReference type="ChEBI" id="CHEBI:30616"/>
    </ligand>
</feature>
<feature type="binding site" evidence="1">
    <location>
        <position position="311"/>
    </location>
    <ligand>
        <name>ADP</name>
        <dbReference type="ChEBI" id="CHEBI:456216"/>
    </ligand>
</feature>
<feature type="binding site" evidence="1">
    <location>
        <position position="311"/>
    </location>
    <ligand>
        <name>ATP</name>
        <dbReference type="ChEBI" id="CHEBI:30616"/>
    </ligand>
</feature>
<feature type="binding site" evidence="1">
    <location>
        <position position="315"/>
    </location>
    <ligand>
        <name>ATP</name>
        <dbReference type="ChEBI" id="CHEBI:30616"/>
    </ligand>
</feature>
<feature type="binding site" evidence="1">
    <location>
        <position position="412"/>
    </location>
    <ligand>
        <name>ADP</name>
        <dbReference type="ChEBI" id="CHEBI:456216"/>
    </ligand>
</feature>
<feature type="binding site" evidence="1">
    <location>
        <position position="412"/>
    </location>
    <ligand>
        <name>ATP</name>
        <dbReference type="ChEBI" id="CHEBI:30616"/>
    </ligand>
</feature>
<feature type="binding site" evidence="1">
    <location>
        <position position="416"/>
    </location>
    <ligand>
        <name>ADP</name>
        <dbReference type="ChEBI" id="CHEBI:456216"/>
    </ligand>
</feature>
<dbReference type="EC" id="2.7.1.30" evidence="1"/>
<dbReference type="EMBL" id="CP000034">
    <property type="protein sequence ID" value="ABB63763.1"/>
    <property type="molecule type" value="Genomic_DNA"/>
</dbReference>
<dbReference type="RefSeq" id="WP_000136815.1">
    <property type="nucleotide sequence ID" value="NC_007606.1"/>
</dbReference>
<dbReference type="RefSeq" id="YP_405254.1">
    <property type="nucleotide sequence ID" value="NC_007606.1"/>
</dbReference>
<dbReference type="SMR" id="Q32A92"/>
<dbReference type="STRING" id="300267.SDY_3818"/>
<dbReference type="EnsemblBacteria" id="ABB63763">
    <property type="protein sequence ID" value="ABB63763"/>
    <property type="gene ID" value="SDY_3818"/>
</dbReference>
<dbReference type="KEGG" id="sdy:SDY_3818"/>
<dbReference type="PATRIC" id="fig|300267.13.peg.4509"/>
<dbReference type="HOGENOM" id="CLU_009281_2_3_6"/>
<dbReference type="UniPathway" id="UPA00618">
    <property type="reaction ID" value="UER00672"/>
</dbReference>
<dbReference type="Proteomes" id="UP000002716">
    <property type="component" value="Chromosome"/>
</dbReference>
<dbReference type="GO" id="GO:0005829">
    <property type="term" value="C:cytosol"/>
    <property type="evidence" value="ECO:0007669"/>
    <property type="project" value="TreeGrafter"/>
</dbReference>
<dbReference type="GO" id="GO:0005524">
    <property type="term" value="F:ATP binding"/>
    <property type="evidence" value="ECO:0007669"/>
    <property type="project" value="UniProtKB-UniRule"/>
</dbReference>
<dbReference type="GO" id="GO:0004370">
    <property type="term" value="F:glycerol kinase activity"/>
    <property type="evidence" value="ECO:0000250"/>
    <property type="project" value="UniProtKB"/>
</dbReference>
<dbReference type="GO" id="GO:0046872">
    <property type="term" value="F:metal ion binding"/>
    <property type="evidence" value="ECO:0007669"/>
    <property type="project" value="UniProtKB-KW"/>
</dbReference>
<dbReference type="GO" id="GO:0019563">
    <property type="term" value="P:glycerol catabolic process"/>
    <property type="evidence" value="ECO:0007669"/>
    <property type="project" value="UniProtKB-UniRule"/>
</dbReference>
<dbReference type="GO" id="GO:0006071">
    <property type="term" value="P:glycerol metabolic process"/>
    <property type="evidence" value="ECO:0000250"/>
    <property type="project" value="UniProtKB"/>
</dbReference>
<dbReference type="GO" id="GO:0006072">
    <property type="term" value="P:glycerol-3-phosphate metabolic process"/>
    <property type="evidence" value="ECO:0007669"/>
    <property type="project" value="InterPro"/>
</dbReference>
<dbReference type="CDD" id="cd07786">
    <property type="entry name" value="FGGY_EcGK_like"/>
    <property type="match status" value="1"/>
</dbReference>
<dbReference type="FunFam" id="3.30.420.40:FF:000007">
    <property type="entry name" value="Glycerol kinase"/>
    <property type="match status" value="1"/>
</dbReference>
<dbReference type="FunFam" id="3.30.420.40:FF:000008">
    <property type="entry name" value="Glycerol kinase"/>
    <property type="match status" value="1"/>
</dbReference>
<dbReference type="Gene3D" id="3.30.420.40">
    <property type="match status" value="2"/>
</dbReference>
<dbReference type="HAMAP" id="MF_00186">
    <property type="entry name" value="Glycerol_kin"/>
    <property type="match status" value="1"/>
</dbReference>
<dbReference type="InterPro" id="IPR043129">
    <property type="entry name" value="ATPase_NBD"/>
</dbReference>
<dbReference type="InterPro" id="IPR000577">
    <property type="entry name" value="Carb_kinase_FGGY"/>
</dbReference>
<dbReference type="InterPro" id="IPR018483">
    <property type="entry name" value="Carb_kinase_FGGY_CS"/>
</dbReference>
<dbReference type="InterPro" id="IPR018485">
    <property type="entry name" value="FGGY_C"/>
</dbReference>
<dbReference type="InterPro" id="IPR018484">
    <property type="entry name" value="FGGY_N"/>
</dbReference>
<dbReference type="InterPro" id="IPR005999">
    <property type="entry name" value="Glycerol_kin"/>
</dbReference>
<dbReference type="NCBIfam" id="TIGR01311">
    <property type="entry name" value="glycerol_kin"/>
    <property type="match status" value="1"/>
</dbReference>
<dbReference type="NCBIfam" id="NF000756">
    <property type="entry name" value="PRK00047.1"/>
    <property type="match status" value="1"/>
</dbReference>
<dbReference type="PANTHER" id="PTHR10196:SF69">
    <property type="entry name" value="GLYCEROL KINASE"/>
    <property type="match status" value="1"/>
</dbReference>
<dbReference type="PANTHER" id="PTHR10196">
    <property type="entry name" value="SUGAR KINASE"/>
    <property type="match status" value="1"/>
</dbReference>
<dbReference type="Pfam" id="PF02782">
    <property type="entry name" value="FGGY_C"/>
    <property type="match status" value="1"/>
</dbReference>
<dbReference type="Pfam" id="PF00370">
    <property type="entry name" value="FGGY_N"/>
    <property type="match status" value="1"/>
</dbReference>
<dbReference type="PIRSF" id="PIRSF000538">
    <property type="entry name" value="GlpK"/>
    <property type="match status" value="1"/>
</dbReference>
<dbReference type="SUPFAM" id="SSF53067">
    <property type="entry name" value="Actin-like ATPase domain"/>
    <property type="match status" value="2"/>
</dbReference>
<dbReference type="PROSITE" id="PS00933">
    <property type="entry name" value="FGGY_KINASES_1"/>
    <property type="match status" value="1"/>
</dbReference>
<dbReference type="PROSITE" id="PS00445">
    <property type="entry name" value="FGGY_KINASES_2"/>
    <property type="match status" value="1"/>
</dbReference>